<feature type="chain" id="PRO_0000358495" description="NAD(P)H-quinone oxidoreductase subunit K">
    <location>
        <begin position="1"/>
        <end position="244"/>
    </location>
</feature>
<feature type="binding site" evidence="1">
    <location>
        <position position="51"/>
    </location>
    <ligand>
        <name>[4Fe-4S] cluster</name>
        <dbReference type="ChEBI" id="CHEBI:49883"/>
    </ligand>
</feature>
<feature type="binding site" evidence="1">
    <location>
        <position position="52"/>
    </location>
    <ligand>
        <name>[4Fe-4S] cluster</name>
        <dbReference type="ChEBI" id="CHEBI:49883"/>
    </ligand>
</feature>
<feature type="binding site" evidence="1">
    <location>
        <position position="116"/>
    </location>
    <ligand>
        <name>[4Fe-4S] cluster</name>
        <dbReference type="ChEBI" id="CHEBI:49883"/>
    </ligand>
</feature>
<feature type="binding site" evidence="1">
    <location>
        <position position="147"/>
    </location>
    <ligand>
        <name>[4Fe-4S] cluster</name>
        <dbReference type="ChEBI" id="CHEBI:49883"/>
    </ligand>
</feature>
<proteinExistence type="inferred from homology"/>
<organism>
    <name type="scientific">Synechococcus sp. (strain JA-2-3B'a(2-13))</name>
    <name type="common">Cyanobacteria bacterium Yellowstone B-Prime</name>
    <dbReference type="NCBI Taxonomy" id="321332"/>
    <lineage>
        <taxon>Bacteria</taxon>
        <taxon>Bacillati</taxon>
        <taxon>Cyanobacteriota</taxon>
        <taxon>Cyanophyceae</taxon>
        <taxon>Synechococcales</taxon>
        <taxon>Synechococcaceae</taxon>
        <taxon>Synechococcus</taxon>
    </lineage>
</organism>
<keyword id="KW-0004">4Fe-4S</keyword>
<keyword id="KW-0408">Iron</keyword>
<keyword id="KW-0411">Iron-sulfur</keyword>
<keyword id="KW-0472">Membrane</keyword>
<keyword id="KW-0479">Metal-binding</keyword>
<keyword id="KW-0520">NAD</keyword>
<keyword id="KW-0521">NADP</keyword>
<keyword id="KW-0618">Plastoquinone</keyword>
<keyword id="KW-0874">Quinone</keyword>
<keyword id="KW-1185">Reference proteome</keyword>
<keyword id="KW-0793">Thylakoid</keyword>
<keyword id="KW-1278">Translocase</keyword>
<keyword id="KW-0813">Transport</keyword>
<name>NDHK_SYNJB</name>
<gene>
    <name evidence="1" type="primary">ndhK</name>
    <name type="ordered locus">CYB_2333</name>
</gene>
<accession>Q2JJA9</accession>
<sequence>MTSEKSQVLFPGAAPQVTTDLSNNVVLTTVNDLYNWAKMSSLWPLLYGTACCFIEFAAMLGSRFDFDRFGLLPRSSPRTADLIITAGTVTMKMAPALVKLYQQMAEPKYVIAMGACTISGGMFSSDSYTAVRGVDKLIPVDVYIPGCPPRPEAIMDAIVKLRKKIAAEDMRERGRLQQTHRYYTVKHNLKPVPEIITGKYLESETRQAPPPELAAAIGLPVPPALQTADFKQAEQQLKALQGGV</sequence>
<protein>
    <recommendedName>
        <fullName evidence="1">NAD(P)H-quinone oxidoreductase subunit K</fullName>
        <ecNumber evidence="1">7.1.1.-</ecNumber>
    </recommendedName>
    <alternativeName>
        <fullName evidence="1">NAD(P)H dehydrogenase I subunit K</fullName>
    </alternativeName>
    <alternativeName>
        <fullName evidence="1">NDH-1 subunit K</fullName>
        <shortName evidence="1">NDH-K</shortName>
    </alternativeName>
</protein>
<evidence type="ECO:0000255" key="1">
    <source>
        <dbReference type="HAMAP-Rule" id="MF_01356"/>
    </source>
</evidence>
<reference key="1">
    <citation type="journal article" date="2007" name="ISME J.">
        <title>Population level functional diversity in a microbial community revealed by comparative genomic and metagenomic analyses.</title>
        <authorList>
            <person name="Bhaya D."/>
            <person name="Grossman A.R."/>
            <person name="Steunou A.-S."/>
            <person name="Khuri N."/>
            <person name="Cohan F.M."/>
            <person name="Hamamura N."/>
            <person name="Melendrez M.C."/>
            <person name="Bateson M.M."/>
            <person name="Ward D.M."/>
            <person name="Heidelberg J.F."/>
        </authorList>
    </citation>
    <scope>NUCLEOTIDE SEQUENCE [LARGE SCALE GENOMIC DNA]</scope>
    <source>
        <strain>JA-2-3B'a(2-13)</strain>
    </source>
</reference>
<comment type="function">
    <text evidence="1">NDH-1 shuttles electrons from an unknown electron donor, via FMN and iron-sulfur (Fe-S) centers, to quinones in the respiratory and/or the photosynthetic chain. The immediate electron acceptor for the enzyme in this species is believed to be plastoquinone. Couples the redox reaction to proton translocation, and thus conserves the redox energy in a proton gradient. Cyanobacterial NDH-1 also plays a role in inorganic carbon-concentration.</text>
</comment>
<comment type="catalytic activity">
    <reaction evidence="1">
        <text>a plastoquinone + NADH + (n+1) H(+)(in) = a plastoquinol + NAD(+) + n H(+)(out)</text>
        <dbReference type="Rhea" id="RHEA:42608"/>
        <dbReference type="Rhea" id="RHEA-COMP:9561"/>
        <dbReference type="Rhea" id="RHEA-COMP:9562"/>
        <dbReference type="ChEBI" id="CHEBI:15378"/>
        <dbReference type="ChEBI" id="CHEBI:17757"/>
        <dbReference type="ChEBI" id="CHEBI:57540"/>
        <dbReference type="ChEBI" id="CHEBI:57945"/>
        <dbReference type="ChEBI" id="CHEBI:62192"/>
    </reaction>
</comment>
<comment type="catalytic activity">
    <reaction evidence="1">
        <text>a plastoquinone + NADPH + (n+1) H(+)(in) = a plastoquinol + NADP(+) + n H(+)(out)</text>
        <dbReference type="Rhea" id="RHEA:42612"/>
        <dbReference type="Rhea" id="RHEA-COMP:9561"/>
        <dbReference type="Rhea" id="RHEA-COMP:9562"/>
        <dbReference type="ChEBI" id="CHEBI:15378"/>
        <dbReference type="ChEBI" id="CHEBI:17757"/>
        <dbReference type="ChEBI" id="CHEBI:57783"/>
        <dbReference type="ChEBI" id="CHEBI:58349"/>
        <dbReference type="ChEBI" id="CHEBI:62192"/>
    </reaction>
</comment>
<comment type="cofactor">
    <cofactor evidence="1">
        <name>[4Fe-4S] cluster</name>
        <dbReference type="ChEBI" id="CHEBI:49883"/>
    </cofactor>
    <text evidence="1">Binds 1 [4Fe-4S] cluster.</text>
</comment>
<comment type="subunit">
    <text evidence="1">NDH-1 can be composed of about 15 different subunits; different subcomplexes with different compositions have been identified which probably have different functions.</text>
</comment>
<comment type="subcellular location">
    <subcellularLocation>
        <location evidence="1">Cellular thylakoid membrane</location>
        <topology evidence="1">Peripheral membrane protein</topology>
        <orientation evidence="1">Cytoplasmic side</orientation>
    </subcellularLocation>
</comment>
<comment type="similarity">
    <text evidence="1">Belongs to the complex I 20 kDa subunit family.</text>
</comment>
<dbReference type="EC" id="7.1.1.-" evidence="1"/>
<dbReference type="EMBL" id="CP000240">
    <property type="protein sequence ID" value="ABD03272.1"/>
    <property type="molecule type" value="Genomic_DNA"/>
</dbReference>
<dbReference type="SMR" id="Q2JJA9"/>
<dbReference type="STRING" id="321332.CYB_2333"/>
<dbReference type="KEGG" id="cyb:CYB_2333"/>
<dbReference type="eggNOG" id="COG0377">
    <property type="taxonomic scope" value="Bacteria"/>
</dbReference>
<dbReference type="HOGENOM" id="CLU_055737_2_1_3"/>
<dbReference type="Proteomes" id="UP000001938">
    <property type="component" value="Chromosome"/>
</dbReference>
<dbReference type="GO" id="GO:0031676">
    <property type="term" value="C:plasma membrane-derived thylakoid membrane"/>
    <property type="evidence" value="ECO:0007669"/>
    <property type="project" value="UniProtKB-SubCell"/>
</dbReference>
<dbReference type="GO" id="GO:0045271">
    <property type="term" value="C:respiratory chain complex I"/>
    <property type="evidence" value="ECO:0007669"/>
    <property type="project" value="TreeGrafter"/>
</dbReference>
<dbReference type="GO" id="GO:0051539">
    <property type="term" value="F:4 iron, 4 sulfur cluster binding"/>
    <property type="evidence" value="ECO:0007669"/>
    <property type="project" value="UniProtKB-KW"/>
</dbReference>
<dbReference type="GO" id="GO:0005506">
    <property type="term" value="F:iron ion binding"/>
    <property type="evidence" value="ECO:0007669"/>
    <property type="project" value="UniProtKB-UniRule"/>
</dbReference>
<dbReference type="GO" id="GO:0008137">
    <property type="term" value="F:NADH dehydrogenase (ubiquinone) activity"/>
    <property type="evidence" value="ECO:0007669"/>
    <property type="project" value="InterPro"/>
</dbReference>
<dbReference type="GO" id="GO:0048038">
    <property type="term" value="F:quinone binding"/>
    <property type="evidence" value="ECO:0007669"/>
    <property type="project" value="UniProtKB-KW"/>
</dbReference>
<dbReference type="GO" id="GO:0009060">
    <property type="term" value="P:aerobic respiration"/>
    <property type="evidence" value="ECO:0007669"/>
    <property type="project" value="TreeGrafter"/>
</dbReference>
<dbReference type="GO" id="GO:0015990">
    <property type="term" value="P:electron transport coupled proton transport"/>
    <property type="evidence" value="ECO:0007669"/>
    <property type="project" value="TreeGrafter"/>
</dbReference>
<dbReference type="GO" id="GO:0019684">
    <property type="term" value="P:photosynthesis, light reaction"/>
    <property type="evidence" value="ECO:0007669"/>
    <property type="project" value="UniProtKB-UniRule"/>
</dbReference>
<dbReference type="FunFam" id="3.40.50.12280:FF:000003">
    <property type="entry name" value="NAD(P)H-quinone oxidoreductase subunit K, chloroplastic"/>
    <property type="match status" value="1"/>
</dbReference>
<dbReference type="Gene3D" id="3.40.50.12280">
    <property type="match status" value="1"/>
</dbReference>
<dbReference type="HAMAP" id="MF_01356">
    <property type="entry name" value="NDH1_NuoB"/>
    <property type="match status" value="1"/>
</dbReference>
<dbReference type="InterPro" id="IPR006137">
    <property type="entry name" value="NADH_UbQ_OxRdtase-like_20kDa"/>
</dbReference>
<dbReference type="InterPro" id="IPR006138">
    <property type="entry name" value="NADH_UQ_OxRdtase_20Kd_su"/>
</dbReference>
<dbReference type="NCBIfam" id="TIGR01957">
    <property type="entry name" value="nuoB_fam"/>
    <property type="match status" value="1"/>
</dbReference>
<dbReference type="NCBIfam" id="NF005012">
    <property type="entry name" value="PRK06411.1"/>
    <property type="match status" value="1"/>
</dbReference>
<dbReference type="PANTHER" id="PTHR11995">
    <property type="entry name" value="NADH DEHYDROGENASE"/>
    <property type="match status" value="1"/>
</dbReference>
<dbReference type="PANTHER" id="PTHR11995:SF14">
    <property type="entry name" value="NADH DEHYDROGENASE [UBIQUINONE] IRON-SULFUR PROTEIN 7, MITOCHONDRIAL"/>
    <property type="match status" value="1"/>
</dbReference>
<dbReference type="Pfam" id="PF01058">
    <property type="entry name" value="Oxidored_q6"/>
    <property type="match status" value="1"/>
</dbReference>
<dbReference type="SUPFAM" id="SSF56770">
    <property type="entry name" value="HydA/Nqo6-like"/>
    <property type="match status" value="1"/>
</dbReference>
<dbReference type="PROSITE" id="PS01150">
    <property type="entry name" value="COMPLEX1_20K"/>
    <property type="match status" value="1"/>
</dbReference>